<feature type="chain" id="PRO_0000165635" description="Holliday junction branch migration complex subunit RuvB">
    <location>
        <begin position="1"/>
        <end position="343"/>
    </location>
</feature>
<feature type="region of interest" description="Large ATPase domain (RuvB-L)" evidence="1">
    <location>
        <begin position="1"/>
        <end position="181"/>
    </location>
</feature>
<feature type="region of interest" description="Small ATPAse domain (RuvB-S)" evidence="1">
    <location>
        <begin position="182"/>
        <end position="252"/>
    </location>
</feature>
<feature type="region of interest" description="Head domain (RuvB-H)" evidence="1">
    <location>
        <begin position="255"/>
        <end position="343"/>
    </location>
</feature>
<feature type="binding site" evidence="1">
    <location>
        <position position="20"/>
    </location>
    <ligand>
        <name>ATP</name>
        <dbReference type="ChEBI" id="CHEBI:30616"/>
    </ligand>
</feature>
<feature type="binding site" evidence="1">
    <location>
        <position position="21"/>
    </location>
    <ligand>
        <name>ATP</name>
        <dbReference type="ChEBI" id="CHEBI:30616"/>
    </ligand>
</feature>
<feature type="binding site" evidence="1">
    <location>
        <position position="62"/>
    </location>
    <ligand>
        <name>ATP</name>
        <dbReference type="ChEBI" id="CHEBI:30616"/>
    </ligand>
</feature>
<feature type="binding site" evidence="1">
    <location>
        <position position="65"/>
    </location>
    <ligand>
        <name>ATP</name>
        <dbReference type="ChEBI" id="CHEBI:30616"/>
    </ligand>
</feature>
<feature type="binding site" evidence="1">
    <location>
        <position position="66"/>
    </location>
    <ligand>
        <name>ATP</name>
        <dbReference type="ChEBI" id="CHEBI:30616"/>
    </ligand>
</feature>
<feature type="binding site" evidence="1">
    <location>
        <position position="66"/>
    </location>
    <ligand>
        <name>Mg(2+)</name>
        <dbReference type="ChEBI" id="CHEBI:18420"/>
    </ligand>
</feature>
<feature type="binding site" evidence="1">
    <location>
        <position position="67"/>
    </location>
    <ligand>
        <name>ATP</name>
        <dbReference type="ChEBI" id="CHEBI:30616"/>
    </ligand>
</feature>
<feature type="binding site" evidence="1">
    <location>
        <begin position="128"/>
        <end position="130"/>
    </location>
    <ligand>
        <name>ATP</name>
        <dbReference type="ChEBI" id="CHEBI:30616"/>
    </ligand>
</feature>
<feature type="binding site" evidence="1">
    <location>
        <position position="171"/>
    </location>
    <ligand>
        <name>ATP</name>
        <dbReference type="ChEBI" id="CHEBI:30616"/>
    </ligand>
</feature>
<feature type="binding site" evidence="1">
    <location>
        <position position="181"/>
    </location>
    <ligand>
        <name>ATP</name>
        <dbReference type="ChEBI" id="CHEBI:30616"/>
    </ligand>
</feature>
<feature type="binding site" evidence="1">
    <location>
        <position position="218"/>
    </location>
    <ligand>
        <name>ATP</name>
        <dbReference type="ChEBI" id="CHEBI:30616"/>
    </ligand>
</feature>
<feature type="binding site" evidence="1">
    <location>
        <position position="291"/>
    </location>
    <ligand>
        <name>DNA</name>
        <dbReference type="ChEBI" id="CHEBI:16991"/>
    </ligand>
</feature>
<feature type="binding site" evidence="1">
    <location>
        <position position="310"/>
    </location>
    <ligand>
        <name>DNA</name>
        <dbReference type="ChEBI" id="CHEBI:16991"/>
    </ligand>
</feature>
<feature type="binding site" evidence="1">
    <location>
        <position position="315"/>
    </location>
    <ligand>
        <name>DNA</name>
        <dbReference type="ChEBI" id="CHEBI:16991"/>
    </ligand>
</feature>
<evidence type="ECO:0000255" key="1">
    <source>
        <dbReference type="HAMAP-Rule" id="MF_00016"/>
    </source>
</evidence>
<name>RUVB_XYLFA</name>
<protein>
    <recommendedName>
        <fullName evidence="1">Holliday junction branch migration complex subunit RuvB</fullName>
        <ecNumber evidence="1">3.6.4.-</ecNumber>
    </recommendedName>
</protein>
<keyword id="KW-0067">ATP-binding</keyword>
<keyword id="KW-0963">Cytoplasm</keyword>
<keyword id="KW-0227">DNA damage</keyword>
<keyword id="KW-0233">DNA recombination</keyword>
<keyword id="KW-0234">DNA repair</keyword>
<keyword id="KW-0238">DNA-binding</keyword>
<keyword id="KW-0378">Hydrolase</keyword>
<keyword id="KW-0547">Nucleotide-binding</keyword>
<gene>
    <name evidence="1" type="primary">ruvB</name>
    <name type="ordered locus">XF_1902</name>
</gene>
<sequence length="343" mass="37993">MDRIIDTAATSEDEAIEVSIRPKRLADYLGQQPVREQMDIYIQATKARAEALDHVLIFGPPGLGKTTLSHVIAYELGVKLRVTSGPVIEKAGDLAALLTNLQPYDVLFIDEIHRLSPVVEEVLYPAMEDFQIDIMIGEGPAARSIKIDLPPFTLIGATTRTGLLTAPLRDRFGIVQRLEFYSPEDLARIVRRSAGILNIDCTTEGAAEIAQRARGTPRIANRLLRRVRDYAEVKAGGQITIEVAQAAMQMLKVDQGGFDELDRRLLHTIVEYFDGGPVGIESLAASLSEERGTLEDVVEPYLIQQGFLVRTARGRMATDKAYQHLALQPRERVSAFTDPEDLF</sequence>
<proteinExistence type="inferred from homology"/>
<comment type="function">
    <text evidence="1">The RuvA-RuvB-RuvC complex processes Holliday junction (HJ) DNA during genetic recombination and DNA repair, while the RuvA-RuvB complex plays an important role in the rescue of blocked DNA replication forks via replication fork reversal (RFR). RuvA specifically binds to HJ cruciform DNA, conferring on it an open structure. The RuvB hexamer acts as an ATP-dependent pump, pulling dsDNA into and through the RuvAB complex. RuvB forms 2 homohexamers on either side of HJ DNA bound by 1 or 2 RuvA tetramers; 4 subunits per hexamer contact DNA at a time. Coordinated motions by a converter formed by DNA-disengaged RuvB subunits stimulates ATP hydrolysis and nucleotide exchange. Immobilization of the converter enables RuvB to convert the ATP-contained energy into a lever motion, pulling 2 nucleotides of DNA out of the RuvA tetramer per ATP hydrolyzed, thus driving DNA branch migration. The RuvB motors rotate together with the DNA substrate, which together with the progressing nucleotide cycle form the mechanistic basis for DNA recombination by continuous HJ branch migration. Branch migration allows RuvC to scan DNA until it finds its consensus sequence, where it cleaves and resolves cruciform DNA.</text>
</comment>
<comment type="catalytic activity">
    <reaction evidence="1">
        <text>ATP + H2O = ADP + phosphate + H(+)</text>
        <dbReference type="Rhea" id="RHEA:13065"/>
        <dbReference type="ChEBI" id="CHEBI:15377"/>
        <dbReference type="ChEBI" id="CHEBI:15378"/>
        <dbReference type="ChEBI" id="CHEBI:30616"/>
        <dbReference type="ChEBI" id="CHEBI:43474"/>
        <dbReference type="ChEBI" id="CHEBI:456216"/>
    </reaction>
</comment>
<comment type="subunit">
    <text evidence="1">Homohexamer. Forms an RuvA(8)-RuvB(12)-Holliday junction (HJ) complex. HJ DNA is sandwiched between 2 RuvA tetramers; dsDNA enters through RuvA and exits via RuvB. An RuvB hexamer assembles on each DNA strand where it exits the tetramer. Each RuvB hexamer is contacted by two RuvA subunits (via domain III) on 2 adjacent RuvB subunits; this complex drives branch migration. In the full resolvosome a probable DNA-RuvA(4)-RuvB(12)-RuvC(2) complex forms which resolves the HJ.</text>
</comment>
<comment type="subcellular location">
    <subcellularLocation>
        <location evidence="1">Cytoplasm</location>
    </subcellularLocation>
</comment>
<comment type="domain">
    <text evidence="1">Has 3 domains, the large (RuvB-L) and small ATPase (RuvB-S) domains and the C-terminal head (RuvB-H) domain. The head domain binds DNA, while the ATPase domains jointly bind ATP, ADP or are empty depending on the state of the subunit in the translocation cycle. During a single DNA translocation step the structure of each domain remains the same, but their relative positions change.</text>
</comment>
<comment type="similarity">
    <text evidence="1">Belongs to the RuvB family.</text>
</comment>
<accession>Q9PC79</accession>
<reference key="1">
    <citation type="journal article" date="2000" name="Nature">
        <title>The genome sequence of the plant pathogen Xylella fastidiosa.</title>
        <authorList>
            <person name="Simpson A.J.G."/>
            <person name="Reinach F.C."/>
            <person name="Arruda P."/>
            <person name="Abreu F.A."/>
            <person name="Acencio M."/>
            <person name="Alvarenga R."/>
            <person name="Alves L.M.C."/>
            <person name="Araya J.E."/>
            <person name="Baia G.S."/>
            <person name="Baptista C.S."/>
            <person name="Barros M.H."/>
            <person name="Bonaccorsi E.D."/>
            <person name="Bordin S."/>
            <person name="Bove J.M."/>
            <person name="Briones M.R.S."/>
            <person name="Bueno M.R.P."/>
            <person name="Camargo A.A."/>
            <person name="Camargo L.E.A."/>
            <person name="Carraro D.M."/>
            <person name="Carrer H."/>
            <person name="Colauto N.B."/>
            <person name="Colombo C."/>
            <person name="Costa F.F."/>
            <person name="Costa M.C.R."/>
            <person name="Costa-Neto C.M."/>
            <person name="Coutinho L.L."/>
            <person name="Cristofani M."/>
            <person name="Dias-Neto E."/>
            <person name="Docena C."/>
            <person name="El-Dorry H."/>
            <person name="Facincani A.P."/>
            <person name="Ferreira A.J.S."/>
            <person name="Ferreira V.C.A."/>
            <person name="Ferro J.A."/>
            <person name="Fraga J.S."/>
            <person name="Franca S.C."/>
            <person name="Franco M.C."/>
            <person name="Frohme M."/>
            <person name="Furlan L.R."/>
            <person name="Garnier M."/>
            <person name="Goldman G.H."/>
            <person name="Goldman M.H.S."/>
            <person name="Gomes S.L."/>
            <person name="Gruber A."/>
            <person name="Ho P.L."/>
            <person name="Hoheisel J.D."/>
            <person name="Junqueira M.L."/>
            <person name="Kemper E.L."/>
            <person name="Kitajima J.P."/>
            <person name="Krieger J.E."/>
            <person name="Kuramae E.E."/>
            <person name="Laigret F."/>
            <person name="Lambais M.R."/>
            <person name="Leite L.C.C."/>
            <person name="Lemos E.G.M."/>
            <person name="Lemos M.V.F."/>
            <person name="Lopes S.A."/>
            <person name="Lopes C.R."/>
            <person name="Machado J.A."/>
            <person name="Machado M.A."/>
            <person name="Madeira A.M.B.N."/>
            <person name="Madeira H.M.F."/>
            <person name="Marino C.L."/>
            <person name="Marques M.V."/>
            <person name="Martins E.A.L."/>
            <person name="Martins E.M.F."/>
            <person name="Matsukuma A.Y."/>
            <person name="Menck C.F.M."/>
            <person name="Miracca E.C."/>
            <person name="Miyaki C.Y."/>
            <person name="Monteiro-Vitorello C.B."/>
            <person name="Moon D.H."/>
            <person name="Nagai M.A."/>
            <person name="Nascimento A.L.T.O."/>
            <person name="Netto L.E.S."/>
            <person name="Nhani A. Jr."/>
            <person name="Nobrega F.G."/>
            <person name="Nunes L.R."/>
            <person name="Oliveira M.A."/>
            <person name="de Oliveira M.C."/>
            <person name="de Oliveira R.C."/>
            <person name="Palmieri D.A."/>
            <person name="Paris A."/>
            <person name="Peixoto B.R."/>
            <person name="Pereira G.A.G."/>
            <person name="Pereira H.A. Jr."/>
            <person name="Pesquero J.B."/>
            <person name="Quaggio R.B."/>
            <person name="Roberto P.G."/>
            <person name="Rodrigues V."/>
            <person name="de Rosa A.J.M."/>
            <person name="de Rosa V.E. Jr."/>
            <person name="de Sa R.G."/>
            <person name="Santelli R.V."/>
            <person name="Sawasaki H.E."/>
            <person name="da Silva A.C.R."/>
            <person name="da Silva A.M."/>
            <person name="da Silva F.R."/>
            <person name="Silva W.A. Jr."/>
            <person name="da Silveira J.F."/>
            <person name="Silvestri M.L.Z."/>
            <person name="Siqueira W.J."/>
            <person name="de Souza A.A."/>
            <person name="de Souza A.P."/>
            <person name="Terenzi M.F."/>
            <person name="Truffi D."/>
            <person name="Tsai S.M."/>
            <person name="Tsuhako M.H."/>
            <person name="Vallada H."/>
            <person name="Van Sluys M.A."/>
            <person name="Verjovski-Almeida S."/>
            <person name="Vettore A.L."/>
            <person name="Zago M.A."/>
            <person name="Zatz M."/>
            <person name="Meidanis J."/>
            <person name="Setubal J.C."/>
        </authorList>
    </citation>
    <scope>NUCLEOTIDE SEQUENCE [LARGE SCALE GENOMIC DNA]</scope>
    <source>
        <strain>9a5c</strain>
    </source>
</reference>
<organism>
    <name type="scientific">Xylella fastidiosa (strain 9a5c)</name>
    <dbReference type="NCBI Taxonomy" id="160492"/>
    <lineage>
        <taxon>Bacteria</taxon>
        <taxon>Pseudomonadati</taxon>
        <taxon>Pseudomonadota</taxon>
        <taxon>Gammaproteobacteria</taxon>
        <taxon>Lysobacterales</taxon>
        <taxon>Lysobacteraceae</taxon>
        <taxon>Xylella</taxon>
    </lineage>
</organism>
<dbReference type="EC" id="3.6.4.-" evidence="1"/>
<dbReference type="EMBL" id="AE003849">
    <property type="protein sequence ID" value="AAF84708.1"/>
    <property type="molecule type" value="Genomic_DNA"/>
</dbReference>
<dbReference type="PIR" id="E82623">
    <property type="entry name" value="E82623"/>
</dbReference>
<dbReference type="RefSeq" id="WP_010894368.1">
    <property type="nucleotide sequence ID" value="NC_002488.3"/>
</dbReference>
<dbReference type="SMR" id="Q9PC79"/>
<dbReference type="STRING" id="160492.XF_1902"/>
<dbReference type="KEGG" id="xfa:XF_1902"/>
<dbReference type="eggNOG" id="COG2255">
    <property type="taxonomic scope" value="Bacteria"/>
</dbReference>
<dbReference type="HOGENOM" id="CLU_055599_1_0_6"/>
<dbReference type="Proteomes" id="UP000000812">
    <property type="component" value="Chromosome"/>
</dbReference>
<dbReference type="GO" id="GO:0005737">
    <property type="term" value="C:cytoplasm"/>
    <property type="evidence" value="ECO:0007669"/>
    <property type="project" value="UniProtKB-SubCell"/>
</dbReference>
<dbReference type="GO" id="GO:0048476">
    <property type="term" value="C:Holliday junction resolvase complex"/>
    <property type="evidence" value="ECO:0007669"/>
    <property type="project" value="UniProtKB-UniRule"/>
</dbReference>
<dbReference type="GO" id="GO:0005524">
    <property type="term" value="F:ATP binding"/>
    <property type="evidence" value="ECO:0007669"/>
    <property type="project" value="UniProtKB-UniRule"/>
</dbReference>
<dbReference type="GO" id="GO:0016887">
    <property type="term" value="F:ATP hydrolysis activity"/>
    <property type="evidence" value="ECO:0007669"/>
    <property type="project" value="InterPro"/>
</dbReference>
<dbReference type="GO" id="GO:0000400">
    <property type="term" value="F:four-way junction DNA binding"/>
    <property type="evidence" value="ECO:0007669"/>
    <property type="project" value="UniProtKB-UniRule"/>
</dbReference>
<dbReference type="GO" id="GO:0009378">
    <property type="term" value="F:four-way junction helicase activity"/>
    <property type="evidence" value="ECO:0007669"/>
    <property type="project" value="InterPro"/>
</dbReference>
<dbReference type="GO" id="GO:0006310">
    <property type="term" value="P:DNA recombination"/>
    <property type="evidence" value="ECO:0007669"/>
    <property type="project" value="UniProtKB-UniRule"/>
</dbReference>
<dbReference type="GO" id="GO:0006281">
    <property type="term" value="P:DNA repair"/>
    <property type="evidence" value="ECO:0007669"/>
    <property type="project" value="UniProtKB-UniRule"/>
</dbReference>
<dbReference type="CDD" id="cd00009">
    <property type="entry name" value="AAA"/>
    <property type="match status" value="1"/>
</dbReference>
<dbReference type="FunFam" id="3.40.50.300:FF:000073">
    <property type="entry name" value="Holliday junction ATP-dependent DNA helicase RuvB"/>
    <property type="match status" value="1"/>
</dbReference>
<dbReference type="Gene3D" id="1.10.8.60">
    <property type="match status" value="1"/>
</dbReference>
<dbReference type="Gene3D" id="3.40.50.300">
    <property type="entry name" value="P-loop containing nucleotide triphosphate hydrolases"/>
    <property type="match status" value="1"/>
</dbReference>
<dbReference type="Gene3D" id="1.10.10.10">
    <property type="entry name" value="Winged helix-like DNA-binding domain superfamily/Winged helix DNA-binding domain"/>
    <property type="match status" value="1"/>
</dbReference>
<dbReference type="HAMAP" id="MF_00016">
    <property type="entry name" value="DNA_HJ_migration_RuvB"/>
    <property type="match status" value="1"/>
</dbReference>
<dbReference type="InterPro" id="IPR003593">
    <property type="entry name" value="AAA+_ATPase"/>
</dbReference>
<dbReference type="InterPro" id="IPR041445">
    <property type="entry name" value="AAA_lid_4"/>
</dbReference>
<dbReference type="InterPro" id="IPR004605">
    <property type="entry name" value="DNA_helicase_Holl-junc_RuvB"/>
</dbReference>
<dbReference type="InterPro" id="IPR027417">
    <property type="entry name" value="P-loop_NTPase"/>
</dbReference>
<dbReference type="InterPro" id="IPR008824">
    <property type="entry name" value="RuvB-like_N"/>
</dbReference>
<dbReference type="InterPro" id="IPR008823">
    <property type="entry name" value="RuvB_C"/>
</dbReference>
<dbReference type="InterPro" id="IPR036388">
    <property type="entry name" value="WH-like_DNA-bd_sf"/>
</dbReference>
<dbReference type="InterPro" id="IPR036390">
    <property type="entry name" value="WH_DNA-bd_sf"/>
</dbReference>
<dbReference type="NCBIfam" id="NF000868">
    <property type="entry name" value="PRK00080.1"/>
    <property type="match status" value="1"/>
</dbReference>
<dbReference type="NCBIfam" id="TIGR00635">
    <property type="entry name" value="ruvB"/>
    <property type="match status" value="1"/>
</dbReference>
<dbReference type="PANTHER" id="PTHR42848">
    <property type="match status" value="1"/>
</dbReference>
<dbReference type="PANTHER" id="PTHR42848:SF1">
    <property type="entry name" value="HOLLIDAY JUNCTION BRANCH MIGRATION COMPLEX SUBUNIT RUVB"/>
    <property type="match status" value="1"/>
</dbReference>
<dbReference type="Pfam" id="PF17864">
    <property type="entry name" value="AAA_lid_4"/>
    <property type="match status" value="1"/>
</dbReference>
<dbReference type="Pfam" id="PF05491">
    <property type="entry name" value="RuvB_C"/>
    <property type="match status" value="1"/>
</dbReference>
<dbReference type="Pfam" id="PF05496">
    <property type="entry name" value="RuvB_N"/>
    <property type="match status" value="1"/>
</dbReference>
<dbReference type="SMART" id="SM00382">
    <property type="entry name" value="AAA"/>
    <property type="match status" value="1"/>
</dbReference>
<dbReference type="SUPFAM" id="SSF52540">
    <property type="entry name" value="P-loop containing nucleoside triphosphate hydrolases"/>
    <property type="match status" value="1"/>
</dbReference>
<dbReference type="SUPFAM" id="SSF46785">
    <property type="entry name" value="Winged helix' DNA-binding domain"/>
    <property type="match status" value="1"/>
</dbReference>